<feature type="chain" id="PRO_0000245032" description="D-aminoacyl-tRNA deacylase 1">
    <location>
        <begin position="1"/>
        <end position="209"/>
    </location>
</feature>
<feature type="region of interest" description="Disordered" evidence="5">
    <location>
        <begin position="142"/>
        <end position="209"/>
    </location>
</feature>
<feature type="short sequence motif" description="Gly-cisPro motif, important for rejection of L-amino acids" evidence="2">
    <location>
        <begin position="139"/>
        <end position="140"/>
    </location>
</feature>
<feature type="compositionally biased region" description="Basic and acidic residues" evidence="5">
    <location>
        <begin position="159"/>
        <end position="170"/>
    </location>
</feature>
<feature type="compositionally biased region" description="Basic and acidic residues" evidence="5">
    <location>
        <begin position="181"/>
        <end position="194"/>
    </location>
</feature>
<feature type="binding site" evidence="1">
    <location>
        <position position="4"/>
    </location>
    <ligand>
        <name>Mg(2+)</name>
        <dbReference type="ChEBI" id="CHEBI:18420"/>
    </ligand>
</feature>
<feature type="binding site" evidence="3">
    <location>
        <position position="6"/>
    </location>
    <ligand>
        <name>Mg(2+)</name>
        <dbReference type="ChEBI" id="CHEBI:18420"/>
    </ligand>
</feature>
<feature type="binding site" evidence="3">
    <location>
        <position position="28"/>
    </location>
    <ligand>
        <name>Mg(2+)</name>
        <dbReference type="ChEBI" id="CHEBI:18420"/>
    </ligand>
</feature>
<feature type="modified residue" description="Phosphoserine" evidence="3">
    <location>
        <position position="197"/>
    </location>
</feature>
<feature type="modified residue" description="Phosphoserine" evidence="4">
    <location>
        <position position="204"/>
    </location>
</feature>
<feature type="modified residue" description="Phosphoserine" evidence="3">
    <location>
        <position position="205"/>
    </location>
</feature>
<name>DTD1_BOVIN</name>
<gene>
    <name type="primary">DTD1</name>
    <name type="synonym">HARS2</name>
</gene>
<comment type="function">
    <text evidence="2">An aminoacyl-tRNA editing enzyme that deacylates mischarged D-aminoacyl-tRNAs. Also deacylates mischarged glycyl-tRNA(Ala), protecting cells against glycine mischarging by AlaRS. Acts via tRNA-based rather than protein-based catalysis; rejects L-amino acids rather than detecting D-amino acids in the active site. By recycling D-aminoacyl-tRNA to D-amino acids and free tRNA molecules, this enzyme counteracts the toxicity associated with the formation of D-aminoacyl-tRNA entities in vivo and helps enforce protein L-homochirality.</text>
</comment>
<comment type="function">
    <text evidence="3">ATPase involved in DNA replication, may facilitate loading of CDC45 onto pre-replication complexes.</text>
</comment>
<comment type="catalytic activity">
    <reaction evidence="2">
        <text>glycyl-tRNA(Ala) + H2O = tRNA(Ala) + glycine + H(+)</text>
        <dbReference type="Rhea" id="RHEA:53744"/>
        <dbReference type="Rhea" id="RHEA-COMP:9657"/>
        <dbReference type="Rhea" id="RHEA-COMP:13640"/>
        <dbReference type="ChEBI" id="CHEBI:15377"/>
        <dbReference type="ChEBI" id="CHEBI:15378"/>
        <dbReference type="ChEBI" id="CHEBI:57305"/>
        <dbReference type="ChEBI" id="CHEBI:78442"/>
        <dbReference type="ChEBI" id="CHEBI:78522"/>
        <dbReference type="EC" id="3.1.1.96"/>
    </reaction>
</comment>
<comment type="catalytic activity">
    <reaction evidence="2">
        <text>a D-aminoacyl-tRNA + H2O = a tRNA + a D-alpha-amino acid + H(+)</text>
        <dbReference type="Rhea" id="RHEA:13953"/>
        <dbReference type="Rhea" id="RHEA-COMP:10123"/>
        <dbReference type="Rhea" id="RHEA-COMP:10124"/>
        <dbReference type="ChEBI" id="CHEBI:15377"/>
        <dbReference type="ChEBI" id="CHEBI:15378"/>
        <dbReference type="ChEBI" id="CHEBI:59871"/>
        <dbReference type="ChEBI" id="CHEBI:78442"/>
        <dbReference type="ChEBI" id="CHEBI:79333"/>
        <dbReference type="EC" id="3.1.1.96"/>
    </reaction>
</comment>
<comment type="subunit">
    <text evidence="3">Homodimer. Interacts with CDC45 and TOPBP1 (By similarity).</text>
</comment>
<comment type="subcellular location">
    <subcellularLocation>
        <location evidence="3">Nucleus</location>
    </subcellularLocation>
    <subcellularLocation>
        <location evidence="2">Cytoplasm</location>
    </subcellularLocation>
    <text evidence="3">Associated with chromatin at some replication origins containing functional DNA-unwinding elements (By similarity).</text>
</comment>
<comment type="domain">
    <text evidence="2">A Gly-cisPro motif from one monomer fits into the active site of the other monomer to allow specific chiral rejection of L-amino acids.</text>
</comment>
<comment type="PTM">
    <text evidence="3">Preferentially phosphorylated in cells arrested early in S phase. Phosphorylation in the C-terminus weakens the interaction with CDC45 (By similarity).</text>
</comment>
<comment type="similarity">
    <text evidence="6">Belongs to the DTD family.</text>
</comment>
<protein>
    <recommendedName>
        <fullName evidence="2">D-aminoacyl-tRNA deacylase 1</fullName>
        <shortName>DTD</shortName>
        <ecNumber evidence="2">3.1.1.96</ecNumber>
    </recommendedName>
    <alternativeName>
        <fullName>DNA-unwinding element-binding protein B</fullName>
        <shortName>DUE-B</shortName>
    </alternativeName>
    <alternativeName>
        <fullName evidence="2">Gly-tRNA(Ala) deacylase</fullName>
    </alternativeName>
</protein>
<organism>
    <name type="scientific">Bos taurus</name>
    <name type="common">Bovine</name>
    <dbReference type="NCBI Taxonomy" id="9913"/>
    <lineage>
        <taxon>Eukaryota</taxon>
        <taxon>Metazoa</taxon>
        <taxon>Chordata</taxon>
        <taxon>Craniata</taxon>
        <taxon>Vertebrata</taxon>
        <taxon>Euteleostomi</taxon>
        <taxon>Mammalia</taxon>
        <taxon>Eutheria</taxon>
        <taxon>Laurasiatheria</taxon>
        <taxon>Artiodactyla</taxon>
        <taxon>Ruminantia</taxon>
        <taxon>Pecora</taxon>
        <taxon>Bovidae</taxon>
        <taxon>Bovinae</taxon>
        <taxon>Bos</taxon>
    </lineage>
</organism>
<accession>Q2T9V8</accession>
<reference key="1">
    <citation type="submission" date="2005-12" db="EMBL/GenBank/DDBJ databases">
        <authorList>
            <consortium name="NIH - Mammalian Gene Collection (MGC) project"/>
        </authorList>
    </citation>
    <scope>NUCLEOTIDE SEQUENCE [LARGE SCALE MRNA]</scope>
    <source>
        <strain>Crossbred X Angus</strain>
        <tissue>Liver</tissue>
    </source>
</reference>
<sequence length="209" mass="23232">MKAVVQRVTRASVTVGGEQISAIGRGICVLLGISLEDTQKELEHMVRKILNLRVFEDESGKHWSKSVMDKQYEVLCVSQFTLQCVLKGNKPDFHLAMPAEQAESFYKGFLEQLRKAYRPELVKDGKFGAYMQVHIQNDGPVTIELESPAPGAAASDPKQLSKLEKQQQRKEKTRAKGPSESSKERSAPRKEDRSASSGAEGDVSSEREP</sequence>
<dbReference type="EC" id="3.1.1.96" evidence="2"/>
<dbReference type="EMBL" id="BC111244">
    <property type="protein sequence ID" value="AAI11245.1"/>
    <property type="molecule type" value="mRNA"/>
</dbReference>
<dbReference type="RefSeq" id="NP_001033193.1">
    <property type="nucleotide sequence ID" value="NM_001038104.2"/>
</dbReference>
<dbReference type="RefSeq" id="XP_010809535.1">
    <property type="nucleotide sequence ID" value="XM_010811233.2"/>
</dbReference>
<dbReference type="SMR" id="Q2T9V8"/>
<dbReference type="FunCoup" id="Q2T9V8">
    <property type="interactions" value="3070"/>
</dbReference>
<dbReference type="STRING" id="9913.ENSBTAP00000011800"/>
<dbReference type="PaxDb" id="9913-ENSBTAP00000011800"/>
<dbReference type="GeneID" id="514493"/>
<dbReference type="KEGG" id="bta:514493"/>
<dbReference type="CTD" id="92675"/>
<dbReference type="VEuPathDB" id="HostDB:ENSBTAG00000008964"/>
<dbReference type="eggNOG" id="KOG3323">
    <property type="taxonomic scope" value="Eukaryota"/>
</dbReference>
<dbReference type="HOGENOM" id="CLU_076901_0_0_1"/>
<dbReference type="InParanoid" id="Q2T9V8"/>
<dbReference type="OMA" id="VFGADMK"/>
<dbReference type="OrthoDB" id="275783at2759"/>
<dbReference type="TreeFam" id="TF314886"/>
<dbReference type="Proteomes" id="UP000009136">
    <property type="component" value="Chromosome 13"/>
</dbReference>
<dbReference type="Bgee" id="ENSBTAG00000008964">
    <property type="expression patterns" value="Expressed in myometrium and 108 other cell types or tissues"/>
</dbReference>
<dbReference type="GO" id="GO:0005737">
    <property type="term" value="C:cytoplasm"/>
    <property type="evidence" value="ECO:0000318"/>
    <property type="project" value="GO_Central"/>
</dbReference>
<dbReference type="GO" id="GO:0005634">
    <property type="term" value="C:nucleus"/>
    <property type="evidence" value="ECO:0007669"/>
    <property type="project" value="UniProtKB-SubCell"/>
</dbReference>
<dbReference type="GO" id="GO:0051500">
    <property type="term" value="F:D-tyrosyl-tRNA(Tyr) deacylase activity"/>
    <property type="evidence" value="ECO:0000318"/>
    <property type="project" value="GO_Central"/>
</dbReference>
<dbReference type="GO" id="GO:0003677">
    <property type="term" value="F:DNA binding"/>
    <property type="evidence" value="ECO:0007669"/>
    <property type="project" value="UniProtKB-KW"/>
</dbReference>
<dbReference type="GO" id="GO:0046872">
    <property type="term" value="F:metal ion binding"/>
    <property type="evidence" value="ECO:0007669"/>
    <property type="project" value="UniProtKB-KW"/>
</dbReference>
<dbReference type="GO" id="GO:0000049">
    <property type="term" value="F:tRNA binding"/>
    <property type="evidence" value="ECO:0007669"/>
    <property type="project" value="UniProtKB-KW"/>
</dbReference>
<dbReference type="GO" id="GO:0006260">
    <property type="term" value="P:DNA replication"/>
    <property type="evidence" value="ECO:0007669"/>
    <property type="project" value="UniProtKB-KW"/>
</dbReference>
<dbReference type="GO" id="GO:0006399">
    <property type="term" value="P:tRNA metabolic process"/>
    <property type="evidence" value="ECO:0000318"/>
    <property type="project" value="GO_Central"/>
</dbReference>
<dbReference type="CDD" id="cd00563">
    <property type="entry name" value="Dtyr_deacylase"/>
    <property type="match status" value="1"/>
</dbReference>
<dbReference type="FunFam" id="3.50.80.10:FF:000001">
    <property type="entry name" value="D-aminoacyl-tRNA deacylase"/>
    <property type="match status" value="1"/>
</dbReference>
<dbReference type="Gene3D" id="3.50.80.10">
    <property type="entry name" value="D-tyrosyl-tRNA(Tyr) deacylase"/>
    <property type="match status" value="1"/>
</dbReference>
<dbReference type="HAMAP" id="MF_00518">
    <property type="entry name" value="Deacylase_Dtd"/>
    <property type="match status" value="1"/>
</dbReference>
<dbReference type="InterPro" id="IPR003732">
    <property type="entry name" value="Daa-tRNA_deacyls_DTD"/>
</dbReference>
<dbReference type="InterPro" id="IPR023509">
    <property type="entry name" value="DTD-like_sf"/>
</dbReference>
<dbReference type="NCBIfam" id="TIGR00256">
    <property type="entry name" value="D-aminoacyl-tRNA deacylase"/>
    <property type="match status" value="1"/>
</dbReference>
<dbReference type="PANTHER" id="PTHR10472:SF5">
    <property type="entry name" value="D-AMINOACYL-TRNA DEACYLASE 1"/>
    <property type="match status" value="1"/>
</dbReference>
<dbReference type="PANTHER" id="PTHR10472">
    <property type="entry name" value="D-TYROSYL-TRNA TYR DEACYLASE"/>
    <property type="match status" value="1"/>
</dbReference>
<dbReference type="Pfam" id="PF02580">
    <property type="entry name" value="Tyr_Deacylase"/>
    <property type="match status" value="1"/>
</dbReference>
<dbReference type="SUPFAM" id="SSF69500">
    <property type="entry name" value="DTD-like"/>
    <property type="match status" value="1"/>
</dbReference>
<keyword id="KW-0963">Cytoplasm</keyword>
<keyword id="KW-0235">DNA replication</keyword>
<keyword id="KW-0238">DNA-binding</keyword>
<keyword id="KW-0378">Hydrolase</keyword>
<keyword id="KW-0460">Magnesium</keyword>
<keyword id="KW-0479">Metal-binding</keyword>
<keyword id="KW-0539">Nucleus</keyword>
<keyword id="KW-0597">Phosphoprotein</keyword>
<keyword id="KW-1185">Reference proteome</keyword>
<keyword id="KW-0694">RNA-binding</keyword>
<keyword id="KW-0820">tRNA-binding</keyword>
<evidence type="ECO:0000250" key="1"/>
<evidence type="ECO:0000250" key="2">
    <source>
        <dbReference type="UniProtKB" id="Q8IIS0"/>
    </source>
</evidence>
<evidence type="ECO:0000250" key="3">
    <source>
        <dbReference type="UniProtKB" id="Q8TEA8"/>
    </source>
</evidence>
<evidence type="ECO:0000250" key="4">
    <source>
        <dbReference type="UniProtKB" id="Q9DD18"/>
    </source>
</evidence>
<evidence type="ECO:0000256" key="5">
    <source>
        <dbReference type="SAM" id="MobiDB-lite"/>
    </source>
</evidence>
<evidence type="ECO:0000305" key="6"/>
<proteinExistence type="evidence at transcript level"/>